<sequence>MSPQTETKASVGFKAGVKDYKLTYYTPEYETKDTDILAAFRVTPQPGVPPEEAGAAVAAESSTGTWTTVWTDGLTSLDRYKGRCYHIEPVAGEENQYICYVAYPLDLFEEGSVTNMFTSIVGNVFGFKALRALRLEDLRIPTAYVKTFQGPPHGIQVERDKLNKYGRPLLGCTIKPKLGLSAKNYGRAVYECLRGGLDFTKDDENVNSQPFMRWRDRFLFCAEAIYKSQAETGEIKGHYLNATAGTCEEMMKRAIFARELGVPIVMHDYLTGGFTANTSLAHYCRDNGLLLHIHRAMHAVIDRQKNHGIHFRVLAKALRMSGGDHIHSGTVVGKLEGERDITLGFVDLLRDDFIEKDRSRGIYFTQDWVSLPGVLPVASGGIHVWHMPALTEIFGDDSVLQFGGGTLGHPWGNAPGAVANRVALEACVQARNEGRDLAREGNEIIREACKWSPELAAACEVWKEIKFEFQAMDTL</sequence>
<dbReference type="EC" id="4.1.1.39" evidence="1"/>
<dbReference type="EMBL" id="EU262891">
    <property type="protein sequence ID" value="ABX10104.1"/>
    <property type="molecule type" value="Genomic_DNA"/>
</dbReference>
<dbReference type="RefSeq" id="YP_001687434.1">
    <property type="nucleotide sequence ID" value="NC_010362.1"/>
</dbReference>
<dbReference type="SMR" id="B0Z5B1"/>
<dbReference type="GeneID" id="5955425"/>
<dbReference type="GO" id="GO:0009507">
    <property type="term" value="C:chloroplast"/>
    <property type="evidence" value="ECO:0007669"/>
    <property type="project" value="UniProtKB-SubCell"/>
</dbReference>
<dbReference type="GO" id="GO:0000287">
    <property type="term" value="F:magnesium ion binding"/>
    <property type="evidence" value="ECO:0007669"/>
    <property type="project" value="UniProtKB-UniRule"/>
</dbReference>
<dbReference type="GO" id="GO:0004497">
    <property type="term" value="F:monooxygenase activity"/>
    <property type="evidence" value="ECO:0007669"/>
    <property type="project" value="UniProtKB-KW"/>
</dbReference>
<dbReference type="GO" id="GO:0016984">
    <property type="term" value="F:ribulose-bisphosphate carboxylase activity"/>
    <property type="evidence" value="ECO:0007669"/>
    <property type="project" value="UniProtKB-UniRule"/>
</dbReference>
<dbReference type="GO" id="GO:0009853">
    <property type="term" value="P:photorespiration"/>
    <property type="evidence" value="ECO:0007669"/>
    <property type="project" value="UniProtKB-KW"/>
</dbReference>
<dbReference type="GO" id="GO:0019253">
    <property type="term" value="P:reductive pentose-phosphate cycle"/>
    <property type="evidence" value="ECO:0007669"/>
    <property type="project" value="UniProtKB-UniRule"/>
</dbReference>
<dbReference type="CDD" id="cd08212">
    <property type="entry name" value="RuBisCO_large_I"/>
    <property type="match status" value="1"/>
</dbReference>
<dbReference type="FunFam" id="3.20.20.110:FF:000001">
    <property type="entry name" value="Ribulose bisphosphate carboxylase large chain"/>
    <property type="match status" value="1"/>
</dbReference>
<dbReference type="FunFam" id="3.30.70.150:FF:000001">
    <property type="entry name" value="Ribulose bisphosphate carboxylase large chain"/>
    <property type="match status" value="1"/>
</dbReference>
<dbReference type="Gene3D" id="3.20.20.110">
    <property type="entry name" value="Ribulose bisphosphate carboxylase, large subunit, C-terminal domain"/>
    <property type="match status" value="1"/>
</dbReference>
<dbReference type="Gene3D" id="3.30.70.150">
    <property type="entry name" value="RuBisCO large subunit, N-terminal domain"/>
    <property type="match status" value="1"/>
</dbReference>
<dbReference type="HAMAP" id="MF_01338">
    <property type="entry name" value="RuBisCO_L_type1"/>
    <property type="match status" value="1"/>
</dbReference>
<dbReference type="InterPro" id="IPR033966">
    <property type="entry name" value="RuBisCO"/>
</dbReference>
<dbReference type="InterPro" id="IPR020878">
    <property type="entry name" value="RuBisCo_large_chain_AS"/>
</dbReference>
<dbReference type="InterPro" id="IPR000685">
    <property type="entry name" value="RuBisCO_lsu_C"/>
</dbReference>
<dbReference type="InterPro" id="IPR036376">
    <property type="entry name" value="RuBisCO_lsu_C_sf"/>
</dbReference>
<dbReference type="InterPro" id="IPR017443">
    <property type="entry name" value="RuBisCO_lsu_fd_N"/>
</dbReference>
<dbReference type="InterPro" id="IPR036422">
    <property type="entry name" value="RuBisCO_lsu_N_sf"/>
</dbReference>
<dbReference type="InterPro" id="IPR020888">
    <property type="entry name" value="RuBisCO_lsuI"/>
</dbReference>
<dbReference type="NCBIfam" id="NF003252">
    <property type="entry name" value="PRK04208.1"/>
    <property type="match status" value="1"/>
</dbReference>
<dbReference type="PANTHER" id="PTHR42704">
    <property type="entry name" value="RIBULOSE BISPHOSPHATE CARBOXYLASE"/>
    <property type="match status" value="1"/>
</dbReference>
<dbReference type="PANTHER" id="PTHR42704:SF15">
    <property type="entry name" value="RIBULOSE BISPHOSPHATE CARBOXYLASE LARGE CHAIN"/>
    <property type="match status" value="1"/>
</dbReference>
<dbReference type="Pfam" id="PF00016">
    <property type="entry name" value="RuBisCO_large"/>
    <property type="match status" value="1"/>
</dbReference>
<dbReference type="Pfam" id="PF02788">
    <property type="entry name" value="RuBisCO_large_N"/>
    <property type="match status" value="1"/>
</dbReference>
<dbReference type="SFLD" id="SFLDG01052">
    <property type="entry name" value="RuBisCO"/>
    <property type="match status" value="1"/>
</dbReference>
<dbReference type="SFLD" id="SFLDS00014">
    <property type="entry name" value="RuBisCO"/>
    <property type="match status" value="1"/>
</dbReference>
<dbReference type="SFLD" id="SFLDG00301">
    <property type="entry name" value="RuBisCO-like_proteins"/>
    <property type="match status" value="1"/>
</dbReference>
<dbReference type="SUPFAM" id="SSF51649">
    <property type="entry name" value="RuBisCo, C-terminal domain"/>
    <property type="match status" value="1"/>
</dbReference>
<dbReference type="SUPFAM" id="SSF54966">
    <property type="entry name" value="RuBisCO, large subunit, small (N-terminal) domain"/>
    <property type="match status" value="1"/>
</dbReference>
<dbReference type="PROSITE" id="PS00157">
    <property type="entry name" value="RUBISCO_LARGE"/>
    <property type="match status" value="1"/>
</dbReference>
<keyword id="KW-0007">Acetylation</keyword>
<keyword id="KW-0113">Calvin cycle</keyword>
<keyword id="KW-0120">Carbon dioxide fixation</keyword>
<keyword id="KW-0150">Chloroplast</keyword>
<keyword id="KW-1015">Disulfide bond</keyword>
<keyword id="KW-0456">Lyase</keyword>
<keyword id="KW-0460">Magnesium</keyword>
<keyword id="KW-0479">Metal-binding</keyword>
<keyword id="KW-0488">Methylation</keyword>
<keyword id="KW-0503">Monooxygenase</keyword>
<keyword id="KW-0560">Oxidoreductase</keyword>
<keyword id="KW-0601">Photorespiration</keyword>
<keyword id="KW-0602">Photosynthesis</keyword>
<keyword id="KW-0934">Plastid</keyword>
<evidence type="ECO:0000255" key="1">
    <source>
        <dbReference type="HAMAP-Rule" id="MF_01338"/>
    </source>
</evidence>
<name>RBL_OENPA</name>
<geneLocation type="chloroplast"/>
<protein>
    <recommendedName>
        <fullName evidence="1">Ribulose bisphosphate carboxylase large chain</fullName>
        <shortName evidence="1">RuBisCO large subunit</shortName>
        <ecNumber evidence="1">4.1.1.39</ecNumber>
    </recommendedName>
</protein>
<feature type="propeptide" id="PRO_0000355798" evidence="1">
    <location>
        <begin position="1"/>
        <end position="2"/>
    </location>
</feature>
<feature type="chain" id="PRO_0000355799" description="Ribulose bisphosphate carboxylase large chain">
    <location>
        <begin position="3"/>
        <end position="475"/>
    </location>
</feature>
<feature type="active site" description="Proton acceptor" evidence="1">
    <location>
        <position position="175"/>
    </location>
</feature>
<feature type="active site" description="Proton acceptor" evidence="1">
    <location>
        <position position="294"/>
    </location>
</feature>
<feature type="binding site" description="in homodimeric partner" evidence="1">
    <location>
        <position position="123"/>
    </location>
    <ligand>
        <name>substrate</name>
    </ligand>
</feature>
<feature type="binding site" evidence="1">
    <location>
        <position position="173"/>
    </location>
    <ligand>
        <name>substrate</name>
    </ligand>
</feature>
<feature type="binding site" evidence="1">
    <location>
        <position position="177"/>
    </location>
    <ligand>
        <name>substrate</name>
    </ligand>
</feature>
<feature type="binding site" description="via carbamate group" evidence="1">
    <location>
        <position position="201"/>
    </location>
    <ligand>
        <name>Mg(2+)</name>
        <dbReference type="ChEBI" id="CHEBI:18420"/>
    </ligand>
</feature>
<feature type="binding site" evidence="1">
    <location>
        <position position="203"/>
    </location>
    <ligand>
        <name>Mg(2+)</name>
        <dbReference type="ChEBI" id="CHEBI:18420"/>
    </ligand>
</feature>
<feature type="binding site" evidence="1">
    <location>
        <position position="204"/>
    </location>
    <ligand>
        <name>Mg(2+)</name>
        <dbReference type="ChEBI" id="CHEBI:18420"/>
    </ligand>
</feature>
<feature type="binding site" evidence="1">
    <location>
        <position position="295"/>
    </location>
    <ligand>
        <name>substrate</name>
    </ligand>
</feature>
<feature type="binding site" evidence="1">
    <location>
        <position position="327"/>
    </location>
    <ligand>
        <name>substrate</name>
    </ligand>
</feature>
<feature type="binding site" evidence="1">
    <location>
        <position position="379"/>
    </location>
    <ligand>
        <name>substrate</name>
    </ligand>
</feature>
<feature type="site" description="Transition state stabilizer" evidence="1">
    <location>
        <position position="334"/>
    </location>
</feature>
<feature type="modified residue" description="N-acetylproline" evidence="1">
    <location>
        <position position="3"/>
    </location>
</feature>
<feature type="modified residue" description="N6,N6,N6-trimethyllysine" evidence="1">
    <location>
        <position position="14"/>
    </location>
</feature>
<feature type="modified residue" description="N6-carboxylysine" evidence="1">
    <location>
        <position position="201"/>
    </location>
</feature>
<feature type="disulfide bond" description="Interchain; in linked form" evidence="1">
    <location>
        <position position="247"/>
    </location>
</feature>
<gene>
    <name evidence="1" type="primary">rbcL</name>
</gene>
<comment type="function">
    <text evidence="1">RuBisCO catalyzes two reactions: the carboxylation of D-ribulose 1,5-bisphosphate, the primary event in carbon dioxide fixation, as well as the oxidative fragmentation of the pentose substrate in the photorespiration process. Both reactions occur simultaneously and in competition at the same active site.</text>
</comment>
<comment type="catalytic activity">
    <reaction evidence="1">
        <text>2 (2R)-3-phosphoglycerate + 2 H(+) = D-ribulose 1,5-bisphosphate + CO2 + H2O</text>
        <dbReference type="Rhea" id="RHEA:23124"/>
        <dbReference type="ChEBI" id="CHEBI:15377"/>
        <dbReference type="ChEBI" id="CHEBI:15378"/>
        <dbReference type="ChEBI" id="CHEBI:16526"/>
        <dbReference type="ChEBI" id="CHEBI:57870"/>
        <dbReference type="ChEBI" id="CHEBI:58272"/>
        <dbReference type="EC" id="4.1.1.39"/>
    </reaction>
</comment>
<comment type="catalytic activity">
    <reaction evidence="1">
        <text>D-ribulose 1,5-bisphosphate + O2 = 2-phosphoglycolate + (2R)-3-phosphoglycerate + 2 H(+)</text>
        <dbReference type="Rhea" id="RHEA:36631"/>
        <dbReference type="ChEBI" id="CHEBI:15378"/>
        <dbReference type="ChEBI" id="CHEBI:15379"/>
        <dbReference type="ChEBI" id="CHEBI:57870"/>
        <dbReference type="ChEBI" id="CHEBI:58033"/>
        <dbReference type="ChEBI" id="CHEBI:58272"/>
    </reaction>
</comment>
<comment type="cofactor">
    <cofactor evidence="1">
        <name>Mg(2+)</name>
        <dbReference type="ChEBI" id="CHEBI:18420"/>
    </cofactor>
    <text evidence="1">Binds 1 Mg(2+) ion per subunit.</text>
</comment>
<comment type="subunit">
    <text evidence="1">Heterohexadecamer of 8 large chains and 8 small chains; disulfide-linked. The disulfide link is formed within the large subunit homodimers.</text>
</comment>
<comment type="subcellular location">
    <subcellularLocation>
        <location>Plastid</location>
        <location>Chloroplast</location>
    </subcellularLocation>
</comment>
<comment type="PTM">
    <text evidence="1">The disulfide bond which can form in the large chain dimeric partners within the hexadecamer appears to be associated with oxidative stress and protein turnover.</text>
</comment>
<comment type="miscellaneous">
    <text evidence="1">The basic functional RuBisCO is composed of a large chain homodimer in a 'head-to-tail' conformation. In form I RuBisCO this homodimer is arranged in a barrel-like tetramer with the small subunits forming a tetrameric 'cap' on each end of the 'barrel'.</text>
</comment>
<comment type="similarity">
    <text evidence="1">Belongs to the RuBisCO large chain family. Type I subfamily.</text>
</comment>
<proteinExistence type="inferred from homology"/>
<organism>
    <name type="scientific">Oenothera parviflora</name>
    <name type="common">Small-flowered evening primrose</name>
    <name type="synonym">Oenothera cruciata</name>
    <dbReference type="NCBI Taxonomy" id="482429"/>
    <lineage>
        <taxon>Eukaryota</taxon>
        <taxon>Viridiplantae</taxon>
        <taxon>Streptophyta</taxon>
        <taxon>Embryophyta</taxon>
        <taxon>Tracheophyta</taxon>
        <taxon>Spermatophyta</taxon>
        <taxon>Magnoliopsida</taxon>
        <taxon>eudicotyledons</taxon>
        <taxon>Gunneridae</taxon>
        <taxon>Pentapetalae</taxon>
        <taxon>rosids</taxon>
        <taxon>malvids</taxon>
        <taxon>Myrtales</taxon>
        <taxon>Onagraceae</taxon>
        <taxon>Onagroideae</taxon>
        <taxon>Onagreae</taxon>
        <taxon>Oenothera</taxon>
    </lineage>
</organism>
<accession>B0Z5B1</accession>
<reference key="1">
    <citation type="journal article" date="2008" name="Nucleic Acids Res.">
        <title>The complete nucleotide sequences of the five genetically distinct plastid genomes of Oenothera, subsection Oenothera: I. Sequence evaluation and plastome evolution.</title>
        <authorList>
            <person name="Greiner S."/>
            <person name="Wang X."/>
            <person name="Rauwolf U."/>
            <person name="Silber M.V."/>
            <person name="Mayer K."/>
            <person name="Meurer J."/>
            <person name="Haberer G."/>
            <person name="Herrmann R.G."/>
        </authorList>
    </citation>
    <scope>NUCLEOTIDE SEQUENCE [LARGE SCALE GENOMIC DNA]</scope>
    <source>
        <strain>cv. Atrovirens</strain>
    </source>
</reference>